<gene>
    <name evidence="3" type="primary">cle7</name>
</gene>
<protein>
    <recommendedName>
        <fullName evidence="3">Terpene cyclase cle7</fullName>
        <ecNumber evidence="2">4.2.3.-</ecNumber>
    </recommendedName>
    <alternativeName>
        <fullName evidence="3">Chevalone E biosynthesis cluster protein 73</fullName>
    </alternativeName>
</protein>
<proteinExistence type="evidence at protein level"/>
<reference key="1">
    <citation type="journal article" date="2019" name="Org. Chem. Front.">
        <title>Genome mining for fungal polyketide-diterpenoid hybrids: discovery of key terpene cyclases and multifunctional P450s for structural diversification.</title>
        <authorList>
            <person name="Wang W.G."/>
            <person name="Du L.Q."/>
            <person name="Sheng S.L."/>
            <person name="Li A."/>
            <person name="Li Y.P."/>
            <person name="Cheng G.G."/>
            <person name="Li G.P."/>
            <person name="Sun G."/>
            <person name="Hu Q."/>
            <person name="Matsuda Y."/>
        </authorList>
    </citation>
    <scope>NUCLEOTIDE SEQUENCE [GENOMIC DNA]</scope>
    <scope>FUNCTION</scope>
    <scope>CATALYTIC ACTIVITY</scope>
    <scope>PATHWAY</scope>
    <scope>BIOTECHNOLOGY</scope>
    <source>
        <strain>0312</strain>
    </source>
</reference>
<feature type="chain" id="PRO_0000461044" description="Terpene cyclase cle7">
    <location>
        <begin position="1"/>
        <end position="242"/>
    </location>
</feature>
<feature type="transmembrane region" description="Helical" evidence="1">
    <location>
        <begin position="20"/>
        <end position="40"/>
    </location>
</feature>
<feature type="transmembrane region" description="Helical" evidence="1">
    <location>
        <begin position="50"/>
        <end position="69"/>
    </location>
</feature>
<feature type="transmembrane region" description="Helical" evidence="1">
    <location>
        <begin position="79"/>
        <end position="101"/>
    </location>
</feature>
<feature type="transmembrane region" description="Helical" evidence="1">
    <location>
        <begin position="117"/>
        <end position="137"/>
    </location>
</feature>
<feature type="transmembrane region" description="Helical" evidence="1">
    <location>
        <begin position="143"/>
        <end position="163"/>
    </location>
</feature>
<feature type="transmembrane region" description="Helical" evidence="1">
    <location>
        <begin position="172"/>
        <end position="192"/>
    </location>
</feature>
<feature type="transmembrane region" description="Helical" evidence="1">
    <location>
        <begin position="207"/>
        <end position="227"/>
    </location>
</feature>
<comment type="function">
    <text evidence="2">Non-reducing polyketide synthase; part of the cluster A that mediates the biosynthesis of chevalone E and its oxidized derivatives that possess a unique five-membered lactone ring and can synergistically enhance the cytotoxicity of doxorubicin (DOX) in breast cancer cells (Ref.1). Within the pathway, cle7 takes part to the biosynthesis of the molecular scaffold by catalyzing the cyclization of the prenyl group initiated by protonation and ring-opening of the epoxide to produce the chevalone E intermediate (Ref.1). The molecular scaffold is commonly biosynthesized by a series of enzymes including the non-reducing polyketide synthase (NR-PKS) cle1 that produces the alpha-pyrone triacetic acid lactone (TAL); The membrane-bound prenyltransferase cle5 that accepts TAL as its substrate to perform a C-3 geranylgeranylation reaction, in which the pathway-dedicated GGPS cle6 is required to provide GGPP, the other substrate of cle5; the FAD-dependent monooxygenase Cle3 that forms an (S)-epoxide ring at the terminal olefin of the geranylgeranyl group; and the terpene cyclase Cle7 that catalyzes the cyclization of the prenyl group that yields the pentacyclic pathway intermediate chevalone E (Ref.1). Chevalone E can derivatize into seven new oxidized analogs by the cytochrome P450 monooxygenases cle2 (acting at C-20) and cle4 (acting at C-11 and C-12) (Ref.1).</text>
</comment>
<comment type="pathway">
    <text evidence="2">Secondary metabolite biosynthesis; terpenoid biosynthesis.</text>
</comment>
<comment type="subcellular location">
    <subcellularLocation>
        <location evidence="1">Membrane</location>
        <topology evidence="1">Multi-pass membrane protein</topology>
    </subcellularLocation>
</comment>
<comment type="biotechnology">
    <text evidence="2">Chevalone E derivatives produced by this cluster are interesting candidates for cancer therapy since they synergistically enhance the cytotoxicity of doxorubicin (DOX) in both MDA-MB-231 and MCF-7 breast cancer cell lines.</text>
</comment>
<comment type="similarity">
    <text evidence="4">Belongs to the paxB family.</text>
</comment>
<organism>
    <name type="scientific">Aspergillus versicolor</name>
    <dbReference type="NCBI Taxonomy" id="46472"/>
    <lineage>
        <taxon>Eukaryota</taxon>
        <taxon>Fungi</taxon>
        <taxon>Dikarya</taxon>
        <taxon>Ascomycota</taxon>
        <taxon>Pezizomycotina</taxon>
        <taxon>Eurotiomycetes</taxon>
        <taxon>Eurotiomycetidae</taxon>
        <taxon>Eurotiales</taxon>
        <taxon>Aspergillaceae</taxon>
        <taxon>Aspergillus</taxon>
        <taxon>Aspergillus subgen. Nidulantes</taxon>
    </lineage>
</organism>
<name>CLE7_ASPVE</name>
<sequence>MEEGWDFDSSPPSFKQVQPLLLTLFSLSGTGWLINYITTIRTAYRDRTPGVSLVALTNNLAWELVFAILHPPPLPVAKVILRSWLFVDIFVIYTTAKFARSSSISSNAPLLHRYLHLFVLFGILGFFSGHWALSVLLSPIKAFYWSGMMCLVVMSGTALGILVQRGHTRGMSYGMWFSRFVGSIFAVASLFLRSTYWPQVWGWSDNILMRWFAGAFVVLDGLYGVCFWYTRRVEQRQRDKVA</sequence>
<keyword id="KW-0456">Lyase</keyword>
<keyword id="KW-0472">Membrane</keyword>
<keyword id="KW-0812">Transmembrane</keyword>
<keyword id="KW-1133">Transmembrane helix</keyword>
<dbReference type="EC" id="4.2.3.-" evidence="2"/>
<dbReference type="EMBL" id="LC422695">
    <property type="protein sequence ID" value="BBG28477.1"/>
    <property type="molecule type" value="Genomic_DNA"/>
</dbReference>
<dbReference type="VEuPathDB" id="FungiDB:ASPVEDRAFT_182223"/>
<dbReference type="UniPathway" id="UPA00213"/>
<dbReference type="GO" id="GO:0016020">
    <property type="term" value="C:membrane"/>
    <property type="evidence" value="ECO:0007669"/>
    <property type="project" value="UniProtKB-SubCell"/>
</dbReference>
<dbReference type="GO" id="GO:0016829">
    <property type="term" value="F:lyase activity"/>
    <property type="evidence" value="ECO:0007669"/>
    <property type="project" value="UniProtKB-KW"/>
</dbReference>
<dbReference type="InterPro" id="IPR039020">
    <property type="entry name" value="PaxB-like"/>
</dbReference>
<dbReference type="PANTHER" id="PTHR42038">
    <property type="match status" value="1"/>
</dbReference>
<dbReference type="PANTHER" id="PTHR42038:SF3">
    <property type="entry name" value="INTEGRAL MEMBRANE PROTEIN (AFU_ORTHOLOGUE AFUA_5G14600)"/>
    <property type="match status" value="1"/>
</dbReference>
<dbReference type="Pfam" id="PF25129">
    <property type="entry name" value="Pyr4-TMTC"/>
    <property type="match status" value="1"/>
</dbReference>
<evidence type="ECO:0000255" key="1"/>
<evidence type="ECO:0000269" key="2">
    <source ref="1"/>
</evidence>
<evidence type="ECO:0000303" key="3">
    <source ref="1"/>
</evidence>
<evidence type="ECO:0000305" key="4"/>
<accession>A0A3T0ZHJ5</accession>